<keyword id="KW-0240">DNA-directed RNA polymerase</keyword>
<keyword id="KW-0548">Nucleotidyltransferase</keyword>
<keyword id="KW-0804">Transcription</keyword>
<keyword id="KW-0808">Transferase</keyword>
<comment type="function">
    <text evidence="1">Promotes RNA polymerase assembly. Latches the N- and C-terminal regions of the beta' subunit thereby facilitating its interaction with the beta and alpha subunits.</text>
</comment>
<comment type="catalytic activity">
    <reaction evidence="1">
        <text>RNA(n) + a ribonucleoside 5'-triphosphate = RNA(n+1) + diphosphate</text>
        <dbReference type="Rhea" id="RHEA:21248"/>
        <dbReference type="Rhea" id="RHEA-COMP:14527"/>
        <dbReference type="Rhea" id="RHEA-COMP:17342"/>
        <dbReference type="ChEBI" id="CHEBI:33019"/>
        <dbReference type="ChEBI" id="CHEBI:61557"/>
        <dbReference type="ChEBI" id="CHEBI:140395"/>
        <dbReference type="EC" id="2.7.7.6"/>
    </reaction>
</comment>
<comment type="subunit">
    <text evidence="1">The RNAP catalytic core consists of 2 alpha, 1 beta, 1 beta' and 1 omega subunit. When a sigma factor is associated with the core the holoenzyme is formed, which can initiate transcription.</text>
</comment>
<comment type="similarity">
    <text evidence="1">Belongs to the RNA polymerase subunit omega family.</text>
</comment>
<accession>B4S2X2</accession>
<accession>F2G2U2</accession>
<sequence length="90" mass="9861">MARVTVEDAVDKIGNRFDLVLVAARRARQIATEGKDPMVDVQNDKPTVTALREIEEGLVTAATLEQADLQAQEQQEHAEFASVANILSDQ</sequence>
<proteinExistence type="inferred from homology"/>
<evidence type="ECO:0000255" key="1">
    <source>
        <dbReference type="HAMAP-Rule" id="MF_00366"/>
    </source>
</evidence>
<name>RPOZ_ALTMD</name>
<organism>
    <name type="scientific">Alteromonas mediterranea (strain DSM 17117 / CIP 110805 / LMG 28347 / Deep ecotype)</name>
    <dbReference type="NCBI Taxonomy" id="1774373"/>
    <lineage>
        <taxon>Bacteria</taxon>
        <taxon>Pseudomonadati</taxon>
        <taxon>Pseudomonadota</taxon>
        <taxon>Gammaproteobacteria</taxon>
        <taxon>Alteromonadales</taxon>
        <taxon>Alteromonadaceae</taxon>
        <taxon>Alteromonas/Salinimonas group</taxon>
        <taxon>Alteromonas</taxon>
    </lineage>
</organism>
<feature type="chain" id="PRO_1000121184" description="DNA-directed RNA polymerase subunit omega">
    <location>
        <begin position="1"/>
        <end position="90"/>
    </location>
</feature>
<gene>
    <name evidence="1" type="primary">rpoZ</name>
    <name type="ordered locus">MADE_1000765</name>
</gene>
<protein>
    <recommendedName>
        <fullName evidence="1">DNA-directed RNA polymerase subunit omega</fullName>
        <shortName evidence="1">RNAP omega subunit</shortName>
        <ecNumber evidence="1">2.7.7.6</ecNumber>
    </recommendedName>
    <alternativeName>
        <fullName evidence="1">RNA polymerase omega subunit</fullName>
    </alternativeName>
    <alternativeName>
        <fullName evidence="1">Transcriptase subunit omega</fullName>
    </alternativeName>
</protein>
<reference key="1">
    <citation type="journal article" date="2008" name="ISME J.">
        <title>Comparative genomics of two ecotypes of the marine planktonic copiotroph Alteromonas macleodii suggests alternative lifestyles associated with different kinds of particulate organic matter.</title>
        <authorList>
            <person name="Ivars-Martinez E."/>
            <person name="Martin-Cuadrado A.-B."/>
            <person name="D'Auria G."/>
            <person name="Mira A."/>
            <person name="Ferriera S."/>
            <person name="Johnson J."/>
            <person name="Friedman R."/>
            <person name="Rodriguez-Valera F."/>
        </authorList>
    </citation>
    <scope>NUCLEOTIDE SEQUENCE [LARGE SCALE GENOMIC DNA]</scope>
    <source>
        <strain>DSM 17117 / CIP 110805 / LMG 28347 / Deep ecotype</strain>
    </source>
</reference>
<dbReference type="EC" id="2.7.7.6" evidence="1"/>
<dbReference type="EMBL" id="CP001103">
    <property type="protein sequence ID" value="AEA96302.1"/>
    <property type="molecule type" value="Genomic_DNA"/>
</dbReference>
<dbReference type="RefSeq" id="WP_012516676.1">
    <property type="nucleotide sequence ID" value="NC_011138.3"/>
</dbReference>
<dbReference type="SMR" id="B4S2X2"/>
<dbReference type="GeneID" id="56340764"/>
<dbReference type="KEGG" id="amc:MADE_1000765"/>
<dbReference type="PATRIC" id="fig|314275.5.peg.158"/>
<dbReference type="HOGENOM" id="CLU_125406_5_2_6"/>
<dbReference type="Proteomes" id="UP000001870">
    <property type="component" value="Chromosome"/>
</dbReference>
<dbReference type="GO" id="GO:0000428">
    <property type="term" value="C:DNA-directed RNA polymerase complex"/>
    <property type="evidence" value="ECO:0007669"/>
    <property type="project" value="UniProtKB-KW"/>
</dbReference>
<dbReference type="GO" id="GO:0003677">
    <property type="term" value="F:DNA binding"/>
    <property type="evidence" value="ECO:0007669"/>
    <property type="project" value="UniProtKB-UniRule"/>
</dbReference>
<dbReference type="GO" id="GO:0003899">
    <property type="term" value="F:DNA-directed RNA polymerase activity"/>
    <property type="evidence" value="ECO:0007669"/>
    <property type="project" value="UniProtKB-UniRule"/>
</dbReference>
<dbReference type="GO" id="GO:0006351">
    <property type="term" value="P:DNA-templated transcription"/>
    <property type="evidence" value="ECO:0007669"/>
    <property type="project" value="UniProtKB-UniRule"/>
</dbReference>
<dbReference type="Gene3D" id="3.90.940.10">
    <property type="match status" value="1"/>
</dbReference>
<dbReference type="HAMAP" id="MF_00366">
    <property type="entry name" value="RNApol_bact_RpoZ"/>
    <property type="match status" value="1"/>
</dbReference>
<dbReference type="InterPro" id="IPR003716">
    <property type="entry name" value="DNA-dir_RNA_pol_omega"/>
</dbReference>
<dbReference type="InterPro" id="IPR006110">
    <property type="entry name" value="Pol_omega/Rpo6/RPB6"/>
</dbReference>
<dbReference type="InterPro" id="IPR036161">
    <property type="entry name" value="RPB6/omega-like_sf"/>
</dbReference>
<dbReference type="NCBIfam" id="TIGR00690">
    <property type="entry name" value="rpoZ"/>
    <property type="match status" value="1"/>
</dbReference>
<dbReference type="PANTHER" id="PTHR34476">
    <property type="entry name" value="DNA-DIRECTED RNA POLYMERASE SUBUNIT OMEGA"/>
    <property type="match status" value="1"/>
</dbReference>
<dbReference type="PANTHER" id="PTHR34476:SF1">
    <property type="entry name" value="DNA-DIRECTED RNA POLYMERASE SUBUNIT OMEGA"/>
    <property type="match status" value="1"/>
</dbReference>
<dbReference type="Pfam" id="PF01192">
    <property type="entry name" value="RNA_pol_Rpb6"/>
    <property type="match status" value="1"/>
</dbReference>
<dbReference type="SMART" id="SM01409">
    <property type="entry name" value="RNA_pol_Rpb6"/>
    <property type="match status" value="1"/>
</dbReference>
<dbReference type="SUPFAM" id="SSF63562">
    <property type="entry name" value="RPB6/omega subunit-like"/>
    <property type="match status" value="1"/>
</dbReference>